<keyword id="KW-1185">Reference proteome</keyword>
<keyword id="KW-0687">Ribonucleoprotein</keyword>
<keyword id="KW-0689">Ribosomal protein</keyword>
<reference key="1">
    <citation type="journal article" date="2009" name="Proc. Natl. Acad. Sci. U.S.A.">
        <title>Characterizing a model human gut microbiota composed of members of its two dominant bacterial phyla.</title>
        <authorList>
            <person name="Mahowald M.A."/>
            <person name="Rey F.E."/>
            <person name="Seedorf H."/>
            <person name="Turnbaugh P.J."/>
            <person name="Fulton R.S."/>
            <person name="Wollam A."/>
            <person name="Shah N."/>
            <person name="Wang C."/>
            <person name="Magrini V."/>
            <person name="Wilson R.K."/>
            <person name="Cantarel B.L."/>
            <person name="Coutinho P.M."/>
            <person name="Henrissat B."/>
            <person name="Crock L.W."/>
            <person name="Russell A."/>
            <person name="Verberkmoes N.C."/>
            <person name="Hettich R.L."/>
            <person name="Gordon J.I."/>
        </authorList>
    </citation>
    <scope>NUCLEOTIDE SEQUENCE [LARGE SCALE GENOMIC DNA]</scope>
    <source>
        <strain>ATCC 27750 / DSM 3376 / VPI C15-48 / C15-B4</strain>
    </source>
</reference>
<feature type="chain" id="PRO_1000205758" description="Small ribosomal subunit protein bS16">
    <location>
        <begin position="1"/>
        <end position="81"/>
    </location>
</feature>
<accession>C4Z0E0</accession>
<proteinExistence type="inferred from homology"/>
<protein>
    <recommendedName>
        <fullName evidence="1">Small ribosomal subunit protein bS16</fullName>
    </recommendedName>
    <alternativeName>
        <fullName evidence="2">30S ribosomal protein S16</fullName>
    </alternativeName>
</protein>
<gene>
    <name evidence="1" type="primary">rpsP</name>
    <name type="ordered locus">EUBELI_01052</name>
</gene>
<organism>
    <name type="scientific">Lachnospira eligens (strain ATCC 27750 / DSM 3376 / VPI C15-48 / C15-B4)</name>
    <name type="common">Eubacterium eligens</name>
    <dbReference type="NCBI Taxonomy" id="515620"/>
    <lineage>
        <taxon>Bacteria</taxon>
        <taxon>Bacillati</taxon>
        <taxon>Bacillota</taxon>
        <taxon>Clostridia</taxon>
        <taxon>Lachnospirales</taxon>
        <taxon>Lachnospiraceae</taxon>
        <taxon>Lachnospira</taxon>
    </lineage>
</organism>
<evidence type="ECO:0000255" key="1">
    <source>
        <dbReference type="HAMAP-Rule" id="MF_00385"/>
    </source>
</evidence>
<evidence type="ECO:0000305" key="2"/>
<name>RS16_LACE2</name>
<comment type="similarity">
    <text evidence="1">Belongs to the bacterial ribosomal protein bS16 family.</text>
</comment>
<sequence length="81" mass="9183">MAVKIRLKRLGEKKNPFYRIIVADSRSPRNGRFIDEIGTYDPNYDPCKLNIDAEAAKKWLSNGAQPTEVVGKLFKMAGIEK</sequence>
<dbReference type="EMBL" id="CP001104">
    <property type="protein sequence ID" value="ACR72053.1"/>
    <property type="molecule type" value="Genomic_DNA"/>
</dbReference>
<dbReference type="RefSeq" id="WP_012739288.1">
    <property type="nucleotide sequence ID" value="NC_012778.1"/>
</dbReference>
<dbReference type="SMR" id="C4Z0E0"/>
<dbReference type="STRING" id="515620.EUBELI_01052"/>
<dbReference type="GeneID" id="41355778"/>
<dbReference type="KEGG" id="eel:EUBELI_01052"/>
<dbReference type="eggNOG" id="COG0228">
    <property type="taxonomic scope" value="Bacteria"/>
</dbReference>
<dbReference type="HOGENOM" id="CLU_100590_5_0_9"/>
<dbReference type="Proteomes" id="UP000001476">
    <property type="component" value="Chromosome"/>
</dbReference>
<dbReference type="GO" id="GO:0005737">
    <property type="term" value="C:cytoplasm"/>
    <property type="evidence" value="ECO:0007669"/>
    <property type="project" value="UniProtKB-ARBA"/>
</dbReference>
<dbReference type="GO" id="GO:0015935">
    <property type="term" value="C:small ribosomal subunit"/>
    <property type="evidence" value="ECO:0007669"/>
    <property type="project" value="TreeGrafter"/>
</dbReference>
<dbReference type="GO" id="GO:0003735">
    <property type="term" value="F:structural constituent of ribosome"/>
    <property type="evidence" value="ECO:0007669"/>
    <property type="project" value="InterPro"/>
</dbReference>
<dbReference type="GO" id="GO:0006412">
    <property type="term" value="P:translation"/>
    <property type="evidence" value="ECO:0007669"/>
    <property type="project" value="UniProtKB-UniRule"/>
</dbReference>
<dbReference type="Gene3D" id="3.30.1320.10">
    <property type="match status" value="1"/>
</dbReference>
<dbReference type="HAMAP" id="MF_00385">
    <property type="entry name" value="Ribosomal_bS16"/>
    <property type="match status" value="1"/>
</dbReference>
<dbReference type="InterPro" id="IPR000307">
    <property type="entry name" value="Ribosomal_bS16"/>
</dbReference>
<dbReference type="InterPro" id="IPR023803">
    <property type="entry name" value="Ribosomal_bS16_dom_sf"/>
</dbReference>
<dbReference type="NCBIfam" id="TIGR00002">
    <property type="entry name" value="S16"/>
    <property type="match status" value="1"/>
</dbReference>
<dbReference type="PANTHER" id="PTHR12919">
    <property type="entry name" value="30S RIBOSOMAL PROTEIN S16"/>
    <property type="match status" value="1"/>
</dbReference>
<dbReference type="PANTHER" id="PTHR12919:SF20">
    <property type="entry name" value="SMALL RIBOSOMAL SUBUNIT PROTEIN BS16M"/>
    <property type="match status" value="1"/>
</dbReference>
<dbReference type="Pfam" id="PF00886">
    <property type="entry name" value="Ribosomal_S16"/>
    <property type="match status" value="1"/>
</dbReference>
<dbReference type="SUPFAM" id="SSF54565">
    <property type="entry name" value="Ribosomal protein S16"/>
    <property type="match status" value="1"/>
</dbReference>